<protein>
    <recommendedName>
        <fullName evidence="1">Putative regulatory protein Bcer98_2524</fullName>
    </recommendedName>
</protein>
<reference key="1">
    <citation type="journal article" date="2008" name="Chem. Biol. Interact.">
        <title>Extending the Bacillus cereus group genomics to putative food-borne pathogens of different toxicity.</title>
        <authorList>
            <person name="Lapidus A."/>
            <person name="Goltsman E."/>
            <person name="Auger S."/>
            <person name="Galleron N."/>
            <person name="Segurens B."/>
            <person name="Dossat C."/>
            <person name="Land M.L."/>
            <person name="Broussolle V."/>
            <person name="Brillard J."/>
            <person name="Guinebretiere M.-H."/>
            <person name="Sanchis V."/>
            <person name="Nguen-the C."/>
            <person name="Lereclus D."/>
            <person name="Richardson P."/>
            <person name="Wincker P."/>
            <person name="Weissenbach J."/>
            <person name="Ehrlich S.D."/>
            <person name="Sorokin A."/>
        </authorList>
    </citation>
    <scope>NUCLEOTIDE SEQUENCE [LARGE SCALE GENOMIC DNA]</scope>
    <source>
        <strain>DSM 22905 / CIP 110041 / 391-98 / NVH 391-98</strain>
    </source>
</reference>
<feature type="chain" id="PRO_1000087509" description="Putative regulatory protein Bcer98_2524">
    <location>
        <begin position="1"/>
        <end position="87"/>
    </location>
</feature>
<accession>A7GRK2</accession>
<name>Y2524_BACCN</name>
<proteinExistence type="inferred from homology"/>
<gene>
    <name type="ordered locus">Bcer98_2524</name>
</gene>
<organism>
    <name type="scientific">Bacillus cytotoxicus (strain DSM 22905 / CIP 110041 / 391-98 / NVH 391-98)</name>
    <dbReference type="NCBI Taxonomy" id="315749"/>
    <lineage>
        <taxon>Bacteria</taxon>
        <taxon>Bacillati</taxon>
        <taxon>Bacillota</taxon>
        <taxon>Bacilli</taxon>
        <taxon>Bacillales</taxon>
        <taxon>Bacillaceae</taxon>
        <taxon>Bacillus</taxon>
        <taxon>Bacillus cereus group</taxon>
    </lineage>
</organism>
<sequence length="87" mass="9647">MAMRFLNIGYGNIVSAHRIIAIVSPESAPIKRTVQEAREHNALLDATYGRKTRAVIVMDDGHVVLSPIQPETIAHRLNNKEDLSEEG</sequence>
<evidence type="ECO:0000255" key="1">
    <source>
        <dbReference type="HAMAP-Rule" id="MF_01503"/>
    </source>
</evidence>
<dbReference type="EMBL" id="CP000764">
    <property type="protein sequence ID" value="ABS22760.1"/>
    <property type="molecule type" value="Genomic_DNA"/>
</dbReference>
<dbReference type="SMR" id="A7GRK2"/>
<dbReference type="STRING" id="315749.Bcer98_2524"/>
<dbReference type="KEGG" id="bcy:Bcer98_2524"/>
<dbReference type="eggNOG" id="COG2052">
    <property type="taxonomic scope" value="Bacteria"/>
</dbReference>
<dbReference type="HOGENOM" id="CLU_165326_0_0_9"/>
<dbReference type="OrthoDB" id="5432174at2"/>
<dbReference type="Proteomes" id="UP000002300">
    <property type="component" value="Chromosome"/>
</dbReference>
<dbReference type="HAMAP" id="MF_01503">
    <property type="entry name" value="RemA"/>
    <property type="match status" value="1"/>
</dbReference>
<dbReference type="InterPro" id="IPR007169">
    <property type="entry name" value="RemA-like"/>
</dbReference>
<dbReference type="NCBIfam" id="NF046064">
    <property type="entry name" value="MtxBflmRegRemA"/>
    <property type="match status" value="1"/>
</dbReference>
<dbReference type="NCBIfam" id="NF003315">
    <property type="entry name" value="PRK04323.1"/>
    <property type="match status" value="1"/>
</dbReference>
<dbReference type="PANTHER" id="PTHR38449:SF1">
    <property type="entry name" value="REGULATORY PROTEIN SSL2874-RELATED"/>
    <property type="match status" value="1"/>
</dbReference>
<dbReference type="PANTHER" id="PTHR38449">
    <property type="entry name" value="REGULATORY PROTEIN TM_1690-RELATED"/>
    <property type="match status" value="1"/>
</dbReference>
<dbReference type="Pfam" id="PF04025">
    <property type="entry name" value="RemA-like"/>
    <property type="match status" value="1"/>
</dbReference>
<comment type="similarity">
    <text evidence="1">Belongs to the RemA family.</text>
</comment>